<dbReference type="EC" id="2.4.2.7" evidence="1"/>
<dbReference type="EMBL" id="AE001437">
    <property type="protein sequence ID" value="AAK80232.1"/>
    <property type="molecule type" value="Genomic_DNA"/>
</dbReference>
<dbReference type="PIR" id="E97180">
    <property type="entry name" value="E97180"/>
</dbReference>
<dbReference type="RefSeq" id="NP_348892.1">
    <property type="nucleotide sequence ID" value="NC_003030.1"/>
</dbReference>
<dbReference type="RefSeq" id="WP_010965573.1">
    <property type="nucleotide sequence ID" value="NC_003030.1"/>
</dbReference>
<dbReference type="SMR" id="Q97GU0"/>
<dbReference type="STRING" id="272562.CA_C2275"/>
<dbReference type="KEGG" id="cac:CA_C2275"/>
<dbReference type="PATRIC" id="fig|272562.8.peg.2473"/>
<dbReference type="eggNOG" id="COG0503">
    <property type="taxonomic scope" value="Bacteria"/>
</dbReference>
<dbReference type="HOGENOM" id="CLU_063339_3_0_9"/>
<dbReference type="OrthoDB" id="9803963at2"/>
<dbReference type="UniPathway" id="UPA00588">
    <property type="reaction ID" value="UER00646"/>
</dbReference>
<dbReference type="Proteomes" id="UP000000814">
    <property type="component" value="Chromosome"/>
</dbReference>
<dbReference type="GO" id="GO:0005737">
    <property type="term" value="C:cytoplasm"/>
    <property type="evidence" value="ECO:0007669"/>
    <property type="project" value="UniProtKB-SubCell"/>
</dbReference>
<dbReference type="GO" id="GO:0002055">
    <property type="term" value="F:adenine binding"/>
    <property type="evidence" value="ECO:0007669"/>
    <property type="project" value="TreeGrafter"/>
</dbReference>
<dbReference type="GO" id="GO:0003999">
    <property type="term" value="F:adenine phosphoribosyltransferase activity"/>
    <property type="evidence" value="ECO:0007669"/>
    <property type="project" value="UniProtKB-UniRule"/>
</dbReference>
<dbReference type="GO" id="GO:0016208">
    <property type="term" value="F:AMP binding"/>
    <property type="evidence" value="ECO:0007669"/>
    <property type="project" value="TreeGrafter"/>
</dbReference>
<dbReference type="GO" id="GO:0006168">
    <property type="term" value="P:adenine salvage"/>
    <property type="evidence" value="ECO:0007669"/>
    <property type="project" value="InterPro"/>
</dbReference>
<dbReference type="GO" id="GO:0044209">
    <property type="term" value="P:AMP salvage"/>
    <property type="evidence" value="ECO:0007669"/>
    <property type="project" value="UniProtKB-UniRule"/>
</dbReference>
<dbReference type="GO" id="GO:0006166">
    <property type="term" value="P:purine ribonucleoside salvage"/>
    <property type="evidence" value="ECO:0007669"/>
    <property type="project" value="UniProtKB-KW"/>
</dbReference>
<dbReference type="CDD" id="cd06223">
    <property type="entry name" value="PRTases_typeI"/>
    <property type="match status" value="1"/>
</dbReference>
<dbReference type="FunFam" id="3.40.50.2020:FF:000004">
    <property type="entry name" value="Adenine phosphoribosyltransferase"/>
    <property type="match status" value="1"/>
</dbReference>
<dbReference type="Gene3D" id="3.40.50.2020">
    <property type="match status" value="1"/>
</dbReference>
<dbReference type="HAMAP" id="MF_00004">
    <property type="entry name" value="Aden_phosphoribosyltr"/>
    <property type="match status" value="1"/>
</dbReference>
<dbReference type="InterPro" id="IPR005764">
    <property type="entry name" value="Ade_phspho_trans"/>
</dbReference>
<dbReference type="InterPro" id="IPR000836">
    <property type="entry name" value="PRibTrfase_dom"/>
</dbReference>
<dbReference type="InterPro" id="IPR029057">
    <property type="entry name" value="PRTase-like"/>
</dbReference>
<dbReference type="InterPro" id="IPR050054">
    <property type="entry name" value="UPRTase/APRTase"/>
</dbReference>
<dbReference type="NCBIfam" id="TIGR01090">
    <property type="entry name" value="apt"/>
    <property type="match status" value="1"/>
</dbReference>
<dbReference type="NCBIfam" id="NF002633">
    <property type="entry name" value="PRK02304.1-2"/>
    <property type="match status" value="1"/>
</dbReference>
<dbReference type="NCBIfam" id="NF002634">
    <property type="entry name" value="PRK02304.1-3"/>
    <property type="match status" value="1"/>
</dbReference>
<dbReference type="NCBIfam" id="NF002636">
    <property type="entry name" value="PRK02304.1-5"/>
    <property type="match status" value="1"/>
</dbReference>
<dbReference type="PANTHER" id="PTHR32315">
    <property type="entry name" value="ADENINE PHOSPHORIBOSYLTRANSFERASE"/>
    <property type="match status" value="1"/>
</dbReference>
<dbReference type="PANTHER" id="PTHR32315:SF3">
    <property type="entry name" value="ADENINE PHOSPHORIBOSYLTRANSFERASE"/>
    <property type="match status" value="1"/>
</dbReference>
<dbReference type="Pfam" id="PF00156">
    <property type="entry name" value="Pribosyltran"/>
    <property type="match status" value="1"/>
</dbReference>
<dbReference type="SUPFAM" id="SSF53271">
    <property type="entry name" value="PRTase-like"/>
    <property type="match status" value="1"/>
</dbReference>
<keyword id="KW-0963">Cytoplasm</keyword>
<keyword id="KW-0328">Glycosyltransferase</keyword>
<keyword id="KW-0660">Purine salvage</keyword>
<keyword id="KW-1185">Reference proteome</keyword>
<keyword id="KW-0808">Transferase</keyword>
<protein>
    <recommendedName>
        <fullName evidence="1">Adenine phosphoribosyltransferase</fullName>
        <shortName evidence="1">APRT</shortName>
        <ecNumber evidence="1">2.4.2.7</ecNumber>
    </recommendedName>
</protein>
<organism>
    <name type="scientific">Clostridium acetobutylicum (strain ATCC 824 / DSM 792 / JCM 1419 / IAM 19013 / LMG 5710 / NBRC 13948 / NRRL B-527 / VKM B-1787 / 2291 / W)</name>
    <dbReference type="NCBI Taxonomy" id="272562"/>
    <lineage>
        <taxon>Bacteria</taxon>
        <taxon>Bacillati</taxon>
        <taxon>Bacillota</taxon>
        <taxon>Clostridia</taxon>
        <taxon>Eubacteriales</taxon>
        <taxon>Clostridiaceae</taxon>
        <taxon>Clostridium</taxon>
    </lineage>
</organism>
<sequence>MDLKDSIRVIDGFPKEGISFKDVTTLIQDKEAYKYSVDKIGEYLKDKNVDLIVAPEARGFLFGAPVAYKIGAGFIPVRKKGKLPCETVEVTYELEYGEDILEMHKDAIKKGQRVAIVDDLLATGGTINSVAKLVEALGGEVVAACFVVELTDLNGKDKLGDYDTMSLVKYNV</sequence>
<gene>
    <name evidence="1" type="primary">apt</name>
    <name type="ordered locus">CA_C2275</name>
</gene>
<reference key="1">
    <citation type="journal article" date="2001" name="J. Bacteriol.">
        <title>Genome sequence and comparative analysis of the solvent-producing bacterium Clostridium acetobutylicum.</title>
        <authorList>
            <person name="Noelling J."/>
            <person name="Breton G."/>
            <person name="Omelchenko M.V."/>
            <person name="Makarova K.S."/>
            <person name="Zeng Q."/>
            <person name="Gibson R."/>
            <person name="Lee H.M."/>
            <person name="Dubois J."/>
            <person name="Qiu D."/>
            <person name="Hitti J."/>
            <person name="Wolf Y.I."/>
            <person name="Tatusov R.L."/>
            <person name="Sabathe F."/>
            <person name="Doucette-Stamm L.A."/>
            <person name="Soucaille P."/>
            <person name="Daly M.J."/>
            <person name="Bennett G.N."/>
            <person name="Koonin E.V."/>
            <person name="Smith D.R."/>
        </authorList>
    </citation>
    <scope>NUCLEOTIDE SEQUENCE [LARGE SCALE GENOMIC DNA]</scope>
    <source>
        <strain>ATCC 824 / DSM 792 / JCM 1419 / IAM 19013 / LMG 5710 / NBRC 13948 / NRRL B-527 / VKM B-1787 / 2291 / W</strain>
    </source>
</reference>
<comment type="function">
    <text evidence="1">Catalyzes a salvage reaction resulting in the formation of AMP, that is energically less costly than de novo synthesis.</text>
</comment>
<comment type="catalytic activity">
    <reaction evidence="1">
        <text>AMP + diphosphate = 5-phospho-alpha-D-ribose 1-diphosphate + adenine</text>
        <dbReference type="Rhea" id="RHEA:16609"/>
        <dbReference type="ChEBI" id="CHEBI:16708"/>
        <dbReference type="ChEBI" id="CHEBI:33019"/>
        <dbReference type="ChEBI" id="CHEBI:58017"/>
        <dbReference type="ChEBI" id="CHEBI:456215"/>
        <dbReference type="EC" id="2.4.2.7"/>
    </reaction>
</comment>
<comment type="pathway">
    <text evidence="1">Purine metabolism; AMP biosynthesis via salvage pathway; AMP from adenine: step 1/1.</text>
</comment>
<comment type="subunit">
    <text evidence="1">Homodimer.</text>
</comment>
<comment type="subcellular location">
    <subcellularLocation>
        <location evidence="1">Cytoplasm</location>
    </subcellularLocation>
</comment>
<comment type="similarity">
    <text evidence="1">Belongs to the purine/pyrimidine phosphoribosyltransferase family.</text>
</comment>
<name>APT_CLOAB</name>
<evidence type="ECO:0000255" key="1">
    <source>
        <dbReference type="HAMAP-Rule" id="MF_00004"/>
    </source>
</evidence>
<feature type="chain" id="PRO_0000149373" description="Adenine phosphoribosyltransferase">
    <location>
        <begin position="1"/>
        <end position="172"/>
    </location>
</feature>
<proteinExistence type="inferred from homology"/>
<accession>Q97GU0</accession>